<comment type="catalytic activity">
    <reaction>
        <text>(2R)-3-phosphoglycerate + ATP = (2R)-3-phospho-glyceroyl phosphate + ADP</text>
        <dbReference type="Rhea" id="RHEA:14801"/>
        <dbReference type="ChEBI" id="CHEBI:30616"/>
        <dbReference type="ChEBI" id="CHEBI:57604"/>
        <dbReference type="ChEBI" id="CHEBI:58272"/>
        <dbReference type="ChEBI" id="CHEBI:456216"/>
        <dbReference type="EC" id="2.7.2.3"/>
    </reaction>
</comment>
<comment type="pathway">
    <text>Carbohydrate degradation; glycolysis; pyruvate from D-glyceraldehyde 3-phosphate: step 2/5.</text>
</comment>
<comment type="subunit">
    <text evidence="1">Monomer.</text>
</comment>
<comment type="subcellular location">
    <subcellularLocation>
        <location evidence="2">Cytoplasm</location>
    </subcellularLocation>
</comment>
<comment type="similarity">
    <text evidence="2">Belongs to the phosphoglycerate kinase family.</text>
</comment>
<dbReference type="EC" id="2.7.2.3"/>
<dbReference type="EMBL" id="AE001273">
    <property type="protein sequence ID" value="AAC68288.1"/>
    <property type="molecule type" value="Genomic_DNA"/>
</dbReference>
<dbReference type="PIR" id="A71484">
    <property type="entry name" value="A71484"/>
</dbReference>
<dbReference type="RefSeq" id="NP_220212.1">
    <property type="nucleotide sequence ID" value="NC_000117.1"/>
</dbReference>
<dbReference type="RefSeq" id="WP_009872068.1">
    <property type="nucleotide sequence ID" value="NC_000117.1"/>
</dbReference>
<dbReference type="SMR" id="P0CD78"/>
<dbReference type="FunCoup" id="P0CD78">
    <property type="interactions" value="227"/>
</dbReference>
<dbReference type="STRING" id="272561.CT_693"/>
<dbReference type="EnsemblBacteria" id="AAC68288">
    <property type="protein sequence ID" value="AAC68288"/>
    <property type="gene ID" value="CT_693"/>
</dbReference>
<dbReference type="GeneID" id="884491"/>
<dbReference type="KEGG" id="ctr:CT_693"/>
<dbReference type="PATRIC" id="fig|272561.5.peg.762"/>
<dbReference type="HOGENOM" id="CLU_025427_0_2_0"/>
<dbReference type="InParanoid" id="P0CD78"/>
<dbReference type="OrthoDB" id="9808460at2"/>
<dbReference type="UniPathway" id="UPA00109">
    <property type="reaction ID" value="UER00185"/>
</dbReference>
<dbReference type="Proteomes" id="UP000000431">
    <property type="component" value="Chromosome"/>
</dbReference>
<dbReference type="GO" id="GO:0005829">
    <property type="term" value="C:cytosol"/>
    <property type="evidence" value="ECO:0000318"/>
    <property type="project" value="GO_Central"/>
</dbReference>
<dbReference type="GO" id="GO:0043531">
    <property type="term" value="F:ADP binding"/>
    <property type="evidence" value="ECO:0000318"/>
    <property type="project" value="GO_Central"/>
</dbReference>
<dbReference type="GO" id="GO:0005524">
    <property type="term" value="F:ATP binding"/>
    <property type="evidence" value="ECO:0000318"/>
    <property type="project" value="GO_Central"/>
</dbReference>
<dbReference type="GO" id="GO:0004618">
    <property type="term" value="F:phosphoglycerate kinase activity"/>
    <property type="evidence" value="ECO:0000318"/>
    <property type="project" value="GO_Central"/>
</dbReference>
<dbReference type="GO" id="GO:0006094">
    <property type="term" value="P:gluconeogenesis"/>
    <property type="evidence" value="ECO:0000318"/>
    <property type="project" value="GO_Central"/>
</dbReference>
<dbReference type="GO" id="GO:0006096">
    <property type="term" value="P:glycolytic process"/>
    <property type="evidence" value="ECO:0000318"/>
    <property type="project" value="GO_Central"/>
</dbReference>
<dbReference type="FunFam" id="3.40.50.1260:FF:000007">
    <property type="entry name" value="Phosphoglycerate kinase"/>
    <property type="match status" value="1"/>
</dbReference>
<dbReference type="FunFam" id="3.40.50.1260:FF:000011">
    <property type="entry name" value="Phosphoglycerate kinase"/>
    <property type="match status" value="1"/>
</dbReference>
<dbReference type="Gene3D" id="3.40.50.1260">
    <property type="entry name" value="Phosphoglycerate kinase, N-terminal domain"/>
    <property type="match status" value="2"/>
</dbReference>
<dbReference type="HAMAP" id="MF_00145">
    <property type="entry name" value="Phosphoglyc_kinase"/>
    <property type="match status" value="1"/>
</dbReference>
<dbReference type="InterPro" id="IPR001576">
    <property type="entry name" value="Phosphoglycerate_kinase"/>
</dbReference>
<dbReference type="InterPro" id="IPR015911">
    <property type="entry name" value="Phosphoglycerate_kinase_CS"/>
</dbReference>
<dbReference type="InterPro" id="IPR015824">
    <property type="entry name" value="Phosphoglycerate_kinase_N"/>
</dbReference>
<dbReference type="InterPro" id="IPR036043">
    <property type="entry name" value="Phosphoglycerate_kinase_sf"/>
</dbReference>
<dbReference type="PANTHER" id="PTHR11406">
    <property type="entry name" value="PHOSPHOGLYCERATE KINASE"/>
    <property type="match status" value="1"/>
</dbReference>
<dbReference type="PANTHER" id="PTHR11406:SF23">
    <property type="entry name" value="PHOSPHOGLYCERATE KINASE 1, CHLOROPLASTIC-RELATED"/>
    <property type="match status" value="1"/>
</dbReference>
<dbReference type="Pfam" id="PF00162">
    <property type="entry name" value="PGK"/>
    <property type="match status" value="1"/>
</dbReference>
<dbReference type="PIRSF" id="PIRSF000724">
    <property type="entry name" value="Pgk"/>
    <property type="match status" value="1"/>
</dbReference>
<dbReference type="PRINTS" id="PR00477">
    <property type="entry name" value="PHGLYCKINASE"/>
</dbReference>
<dbReference type="SUPFAM" id="SSF53748">
    <property type="entry name" value="Phosphoglycerate kinase"/>
    <property type="match status" value="1"/>
</dbReference>
<dbReference type="PROSITE" id="PS00111">
    <property type="entry name" value="PGLYCERATE_KINASE"/>
    <property type="match status" value="1"/>
</dbReference>
<gene>
    <name type="primary">pgk</name>
    <name type="ordered locus">CT_693</name>
</gene>
<organism>
    <name type="scientific">Chlamydia trachomatis serovar D (strain ATCC VR-885 / DSM 19411 / UW-3/Cx)</name>
    <dbReference type="NCBI Taxonomy" id="272561"/>
    <lineage>
        <taxon>Bacteria</taxon>
        <taxon>Pseudomonadati</taxon>
        <taxon>Chlamydiota</taxon>
        <taxon>Chlamydiia</taxon>
        <taxon>Chlamydiales</taxon>
        <taxon>Chlamydiaceae</taxon>
        <taxon>Chlamydia/Chlamydophila group</taxon>
        <taxon>Chlamydia</taxon>
    </lineage>
</organism>
<protein>
    <recommendedName>
        <fullName>Phosphoglycerate kinase</fullName>
        <ecNumber>2.7.2.3</ecNumber>
    </recommendedName>
</protein>
<evidence type="ECO:0000250" key="1"/>
<evidence type="ECO:0000305" key="2"/>
<proteinExistence type="inferred from homology"/>
<accession>P0CD78</accession>
<accession>O84699</accession>
<accession>P94686</accession>
<name>PGK_CHLTR</name>
<sequence length="403" mass="42997">MDKLSIRDLSLEGKKVLVRVDFNVPIKDGKILDDVRIHSAMPTIHYLLKQDAAVILVSHVGRPKGGVFEEAYSLAPIVPVLEGYLGHHVPLSPDCIGEVARQAVAQLSPGRVLLLENVRFHKGEEHSDEDPSFAIELAAYADFYVNDAFGTSHRKHASVYRVPQLFPDRAAAGFLMEKELEFLGQHLLVEPKRPFTAILGGAKMSSKIGVIEALLSCVDHLVLAGGMGYTFLRAMNRQVGNSLVEESGIPLAKKVLEKAQALGVKIHLPVDAKVAKQCDSGEDWRELSIQEGIPEGLAGFDIGAQTIELFSKVIQESATIFWNGPVGVYEVPPFDQGSKAIAQCLASHSSAVTVVGGGDAAAVVALAGCASQISHVSTGGGASLEFLEKGSLPGTEILSPAQS</sequence>
<keyword id="KW-0067">ATP-binding</keyword>
<keyword id="KW-0963">Cytoplasm</keyword>
<keyword id="KW-0324">Glycolysis</keyword>
<keyword id="KW-0418">Kinase</keyword>
<keyword id="KW-0547">Nucleotide-binding</keyword>
<keyword id="KW-1185">Reference proteome</keyword>
<keyword id="KW-0808">Transferase</keyword>
<feature type="chain" id="PRO_0000145929" description="Phosphoglycerate kinase">
    <location>
        <begin position="1"/>
        <end position="403"/>
    </location>
</feature>
<feature type="binding site" evidence="1">
    <location>
        <begin position="21"/>
        <end position="23"/>
    </location>
    <ligand>
        <name>substrate</name>
    </ligand>
</feature>
<feature type="binding site" evidence="1">
    <location>
        <position position="36"/>
    </location>
    <ligand>
        <name>substrate</name>
    </ligand>
</feature>
<feature type="binding site" evidence="1">
    <location>
        <begin position="59"/>
        <end position="62"/>
    </location>
    <ligand>
        <name>substrate</name>
    </ligand>
</feature>
<feature type="binding site" evidence="1">
    <location>
        <position position="119"/>
    </location>
    <ligand>
        <name>substrate</name>
    </ligand>
</feature>
<feature type="binding site" evidence="1">
    <location>
        <position position="154"/>
    </location>
    <ligand>
        <name>substrate</name>
    </ligand>
</feature>
<feature type="binding site" evidence="1">
    <location>
        <position position="207"/>
    </location>
    <ligand>
        <name>ATP</name>
        <dbReference type="ChEBI" id="CHEBI:30616"/>
    </ligand>
</feature>
<feature type="binding site" evidence="1">
    <location>
        <position position="299"/>
    </location>
    <ligand>
        <name>ATP</name>
        <dbReference type="ChEBI" id="CHEBI:30616"/>
    </ligand>
</feature>
<feature type="binding site" evidence="1">
    <location>
        <position position="330"/>
    </location>
    <ligand>
        <name>ATP</name>
        <dbReference type="ChEBI" id="CHEBI:30616"/>
    </ligand>
</feature>
<feature type="binding site" evidence="1">
    <location>
        <begin position="357"/>
        <end position="360"/>
    </location>
    <ligand>
        <name>ATP</name>
        <dbReference type="ChEBI" id="CHEBI:30616"/>
    </ligand>
</feature>
<reference key="1">
    <citation type="journal article" date="1998" name="Science">
        <title>Genome sequence of an obligate intracellular pathogen of humans: Chlamydia trachomatis.</title>
        <authorList>
            <person name="Stephens R.S."/>
            <person name="Kalman S."/>
            <person name="Lammel C.J."/>
            <person name="Fan J."/>
            <person name="Marathe R."/>
            <person name="Aravind L."/>
            <person name="Mitchell W.P."/>
            <person name="Olinger L."/>
            <person name="Tatusov R.L."/>
            <person name="Zhao Q."/>
            <person name="Koonin E.V."/>
            <person name="Davis R.W."/>
        </authorList>
    </citation>
    <scope>NUCLEOTIDE SEQUENCE [LARGE SCALE GENOMIC DNA]</scope>
    <source>
        <strain>ATCC VR-885 / DSM 19411 / UW-3/Cx</strain>
    </source>
</reference>